<dbReference type="EMBL" id="AM406671">
    <property type="protein sequence ID" value="CAL96896.1"/>
    <property type="molecule type" value="Genomic_DNA"/>
</dbReference>
<dbReference type="RefSeq" id="WP_011675312.1">
    <property type="nucleotide sequence ID" value="NC_009004.1"/>
</dbReference>
<dbReference type="SMR" id="A2RI03"/>
<dbReference type="STRING" id="416870.llmg_0289"/>
<dbReference type="TCDB" id="3.A.1.25.4">
    <property type="family name" value="the atp-binding cassette (abc) superfamily"/>
</dbReference>
<dbReference type="KEGG" id="llm:llmg_0289"/>
<dbReference type="eggNOG" id="COG0619">
    <property type="taxonomic scope" value="Bacteria"/>
</dbReference>
<dbReference type="HOGENOM" id="CLU_056469_2_2_9"/>
<dbReference type="OrthoDB" id="8075495at2"/>
<dbReference type="PhylomeDB" id="A2RI03"/>
<dbReference type="Proteomes" id="UP000000364">
    <property type="component" value="Chromosome"/>
</dbReference>
<dbReference type="GO" id="GO:0005886">
    <property type="term" value="C:plasma membrane"/>
    <property type="evidence" value="ECO:0000314"/>
    <property type="project" value="UniProtKB"/>
</dbReference>
<dbReference type="GO" id="GO:0042626">
    <property type="term" value="F:ATPase-coupled transmembrane transporter activity"/>
    <property type="evidence" value="ECO:0000314"/>
    <property type="project" value="GO_Central"/>
</dbReference>
<dbReference type="CDD" id="cd16914">
    <property type="entry name" value="EcfT"/>
    <property type="match status" value="1"/>
</dbReference>
<dbReference type="HAMAP" id="MF_01461">
    <property type="entry name" value="EcfT"/>
    <property type="match status" value="1"/>
</dbReference>
<dbReference type="InterPro" id="IPR003339">
    <property type="entry name" value="ABC/ECF_trnsptr_transmembrane"/>
</dbReference>
<dbReference type="InterPro" id="IPR024919">
    <property type="entry name" value="EcfT"/>
</dbReference>
<dbReference type="PANTHER" id="PTHR33514">
    <property type="entry name" value="PROTEIN ABCI12, CHLOROPLASTIC"/>
    <property type="match status" value="1"/>
</dbReference>
<dbReference type="PANTHER" id="PTHR33514:SF13">
    <property type="entry name" value="PROTEIN ABCI12, CHLOROPLASTIC"/>
    <property type="match status" value="1"/>
</dbReference>
<dbReference type="Pfam" id="PF02361">
    <property type="entry name" value="CbiQ"/>
    <property type="match status" value="1"/>
</dbReference>
<feature type="chain" id="PRO_0000408994" description="Energy-coupling factor transporter transmembrane protein EcfT">
    <location>
        <begin position="1"/>
        <end position="266"/>
    </location>
</feature>
<feature type="transmembrane region" description="Helical" evidence="1">
    <location>
        <begin position="29"/>
        <end position="49"/>
    </location>
</feature>
<feature type="transmembrane region" description="Helical" evidence="1">
    <location>
        <begin position="73"/>
        <end position="93"/>
    </location>
</feature>
<feature type="transmembrane region" description="Helical" evidence="1">
    <location>
        <begin position="106"/>
        <end position="126"/>
    </location>
</feature>
<feature type="transmembrane region" description="Helical" evidence="1">
    <location>
        <begin position="151"/>
        <end position="171"/>
    </location>
</feature>
<feature type="transmembrane region" description="Helical" evidence="1">
    <location>
        <begin position="246"/>
        <end position="266"/>
    </location>
</feature>
<gene>
    <name type="primary">ecfT</name>
    <name type="ordered locus">llmg_0289</name>
</gene>
<evidence type="ECO:0000255" key="1"/>
<evidence type="ECO:0000269" key="2">
    <source>
    </source>
</evidence>
<evidence type="ECO:0000305" key="3"/>
<evidence type="ECO:0000305" key="4">
    <source>
    </source>
</evidence>
<proteinExistence type="evidence at protein level"/>
<accession>A2RI03</accession>
<comment type="function">
    <text>Part of a common energy-coupling factor (ECF) ABC-transporter complex. Unlike classic ABC transporters this ECF transporter provides the energy necessary to transport a number of different substrates. In this organism these probably include biotin, thiamine precursor, niacin, pantothenic acid, queuosine precursor, riboflavin and thiamine. Uptake of niacin or riboflavin into proteosomes containing EcfA1A2T and Niax or RibU has been demonstrated. Uptake requires hydrolyzable Mg-ATP and is substrate-specific; NiaX-containing proteosomes did not transport riboflavin.</text>
</comment>
<comment type="subunit">
    <text evidence="2">Forms a stable energy-coupling factor (ECF) transporter complex possibly composed of 2 membrane-embedded substrate-binding proteins (S component), 2 ATP-binding proteins (A component) and 2 transmembrane proteins (T component). In L.lactis forms a stable complex with EcfA' and EcfT and S components. In E.coli forms a stable complex with EcfA, EcfA' and individually with 3 tested S components (BioY, NiaX and ThiT) with a stoichiometry of 1:1:1:1. The core ECF complex interacts with a number of substrate-specific binding components, including BioY, BioY2, HmpT, NiaX, PanT, QueT, RibU and ThiT. May be able to interact with more than 1 S component at a time.</text>
</comment>
<comment type="subcellular location">
    <subcellularLocation>
        <location evidence="4">Cell membrane</location>
        <topology evidence="4">Multi-pass membrane protein</topology>
    </subcellularLocation>
</comment>
<comment type="similarity">
    <text evidence="3">Belongs to the energy-coupling factor EcfT family.</text>
</comment>
<sequence length="266" mass="30161">MQNMLMGRYIPGDSIIHRMDPRSKLLVMIAFVVIIFLAHDWLGYLLLVLYTLAGVLLSKISVSYFLRGLRPMIGLILFTVIFQMLFTNGQHVIFSLWFIKISTESLINAVYIFFRFVLIIFMSTILTLTTPPLTLADGIEKGLGPLKKIKVPVHELGLMLSISLRFIPTLMDDTTMIMNAQKARGMDFGEGNLLKKIKSVIPILIPLFVSSFRRADDLAVAMESRGYQGGDGRTKYRQLKWQSRDSLLVVSIIIMTILLILWSKVS</sequence>
<keyword id="KW-1003">Cell membrane</keyword>
<keyword id="KW-0472">Membrane</keyword>
<keyword id="KW-0812">Transmembrane</keyword>
<keyword id="KW-1133">Transmembrane helix</keyword>
<keyword id="KW-0813">Transport</keyword>
<name>ECFT_LACLM</name>
<organism>
    <name type="scientific">Lactococcus lactis subsp. cremoris (strain MG1363)</name>
    <dbReference type="NCBI Taxonomy" id="416870"/>
    <lineage>
        <taxon>Bacteria</taxon>
        <taxon>Bacillati</taxon>
        <taxon>Bacillota</taxon>
        <taxon>Bacilli</taxon>
        <taxon>Lactobacillales</taxon>
        <taxon>Streptococcaceae</taxon>
        <taxon>Lactococcus</taxon>
        <taxon>Lactococcus cremoris subsp. cremoris</taxon>
    </lineage>
</organism>
<reference key="1">
    <citation type="journal article" date="2007" name="J. Bacteriol.">
        <title>The complete genome sequence of the lactic acid bacterial paradigm Lactococcus lactis subsp. cremoris MG1363.</title>
        <authorList>
            <person name="Wegmann U."/>
            <person name="O'Connell-Motherway M."/>
            <person name="Zomer A."/>
            <person name="Buist G."/>
            <person name="Shearman C."/>
            <person name="Canchaya C."/>
            <person name="Ventura M."/>
            <person name="Goesmann A."/>
            <person name="Gasson M.J."/>
            <person name="Kuipers O.P."/>
            <person name="van Sinderen D."/>
            <person name="Kok J."/>
        </authorList>
    </citation>
    <scope>NUCLEOTIDE SEQUENCE [LARGE SCALE GENOMIC DNA]</scope>
    <source>
        <strain>MG1363</strain>
    </source>
</reference>
<reference key="2">
    <citation type="journal article" date="2011" name="J. Biol. Chem.">
        <title>Quaternary structure and functional unit of energy coupling factor (ECF)-type transporters.</title>
        <authorList>
            <person name="ter Beek J."/>
            <person name="Duurkens R.H."/>
            <person name="Erkens G.B."/>
            <person name="Slotboom D.J."/>
        </authorList>
    </citation>
    <scope>SUBUNIT</scope>
    <scope>SUBCELLULAR LOCATION</scope>
    <scope>TRANSPORT SUBSTRATES</scope>
    <scope>EXPRESSION IN E.COLI AND L.LACTIS</scope>
    <source>
        <strain>MG1363</strain>
    </source>
</reference>
<protein>
    <recommendedName>
        <fullName>Energy-coupling factor transporter transmembrane protein EcfT</fullName>
        <shortName>ECF transporter T component EcfT</shortName>
    </recommendedName>
</protein>